<reference key="1">
    <citation type="journal article" date="2005" name="Proc. Natl. Acad. Sci. U.S.A.">
        <title>The complete genome sequence of Mycobacterium avium subspecies paratuberculosis.</title>
        <authorList>
            <person name="Li L."/>
            <person name="Bannantine J.P."/>
            <person name="Zhang Q."/>
            <person name="Amonsin A."/>
            <person name="May B.J."/>
            <person name="Alt D."/>
            <person name="Banerji N."/>
            <person name="Kanjilal S."/>
            <person name="Kapur V."/>
        </authorList>
    </citation>
    <scope>NUCLEOTIDE SEQUENCE [LARGE SCALE GENOMIC DNA]</scope>
    <source>
        <strain>ATCC BAA-968 / K-10</strain>
    </source>
</reference>
<name>PANC_MYCPA</name>
<feature type="chain" id="PRO_0000128244" description="Pantothenate synthetase">
    <location>
        <begin position="1"/>
        <end position="308"/>
    </location>
</feature>
<feature type="region of interest" description="Disordered" evidence="2">
    <location>
        <begin position="286"/>
        <end position="308"/>
    </location>
</feature>
<feature type="active site" description="Proton donor" evidence="1">
    <location>
        <position position="46"/>
    </location>
</feature>
<feature type="binding site" evidence="1">
    <location>
        <begin position="39"/>
        <end position="46"/>
    </location>
    <ligand>
        <name>ATP</name>
        <dbReference type="ChEBI" id="CHEBI:30616"/>
    </ligand>
</feature>
<feature type="binding site" evidence="1">
    <location>
        <position position="71"/>
    </location>
    <ligand>
        <name>(R)-pantoate</name>
        <dbReference type="ChEBI" id="CHEBI:15980"/>
    </ligand>
</feature>
<feature type="binding site" evidence="1">
    <location>
        <position position="71"/>
    </location>
    <ligand>
        <name>beta-alanine</name>
        <dbReference type="ChEBI" id="CHEBI:57966"/>
    </ligand>
</feature>
<feature type="binding site" evidence="1">
    <location>
        <begin position="157"/>
        <end position="160"/>
    </location>
    <ligand>
        <name>ATP</name>
        <dbReference type="ChEBI" id="CHEBI:30616"/>
    </ligand>
</feature>
<feature type="binding site" evidence="1">
    <location>
        <position position="163"/>
    </location>
    <ligand>
        <name>(R)-pantoate</name>
        <dbReference type="ChEBI" id="CHEBI:15980"/>
    </ligand>
</feature>
<feature type="binding site" evidence="1">
    <location>
        <position position="186"/>
    </location>
    <ligand>
        <name>ATP</name>
        <dbReference type="ChEBI" id="CHEBI:30616"/>
    </ligand>
</feature>
<feature type="binding site" evidence="1">
    <location>
        <begin position="194"/>
        <end position="197"/>
    </location>
    <ligand>
        <name>ATP</name>
        <dbReference type="ChEBI" id="CHEBI:30616"/>
    </ligand>
</feature>
<evidence type="ECO:0000255" key="1">
    <source>
        <dbReference type="HAMAP-Rule" id="MF_00158"/>
    </source>
</evidence>
<evidence type="ECO:0000256" key="2">
    <source>
        <dbReference type="SAM" id="MobiDB-lite"/>
    </source>
</evidence>
<keyword id="KW-0067">ATP-binding</keyword>
<keyword id="KW-0963">Cytoplasm</keyword>
<keyword id="KW-0436">Ligase</keyword>
<keyword id="KW-0547">Nucleotide-binding</keyword>
<keyword id="KW-0566">Pantothenate biosynthesis</keyword>
<keyword id="KW-1185">Reference proteome</keyword>
<protein>
    <recommendedName>
        <fullName evidence="1">Pantothenate synthetase</fullName>
        <shortName evidence="1">PS</shortName>
        <ecNumber evidence="1">6.3.2.1</ecNumber>
    </recommendedName>
    <alternativeName>
        <fullName evidence="1">Pantoate--beta-alanine ligase</fullName>
    </alternativeName>
    <alternativeName>
        <fullName evidence="1">Pantoate-activating enzyme</fullName>
    </alternativeName>
</protein>
<gene>
    <name evidence="1" type="primary">panC</name>
    <name type="ordered locus">MAP_0456</name>
</gene>
<accession>Q743Y5</accession>
<sequence length="308" mass="32736">MKPAFTAGELNTYTSPGDVTAVSRALRHTGRRVMLVPTMGALHDGHLALVRAAKRVPGSVVVVSIFVNPLQFGAGEDLDAYPRTLDDDLALLRSEGVEIAFTPTAAAMYPNGLRTTVQPGPLAAELEGGPRPTHFAGVLTVVCKLLQIVRPDRIFFGEKDYQQLVMIRQMVADLNIDVQVVGVPTVREADGLAMSSRNRYLDATQRELAVTLSAALTAGAHAAHLGGAAALRAARAVLDAVPELTVDYLELRDAGLGPAPAHGSARLLVAARLGNTRLLDNIEMQIETPAGTAGPDGDRQYAQSPWRN</sequence>
<proteinExistence type="inferred from homology"/>
<comment type="function">
    <text evidence="1">Catalyzes the condensation of pantoate with beta-alanine in an ATP-dependent reaction via a pantoyl-adenylate intermediate.</text>
</comment>
<comment type="catalytic activity">
    <reaction evidence="1">
        <text>(R)-pantoate + beta-alanine + ATP = (R)-pantothenate + AMP + diphosphate + H(+)</text>
        <dbReference type="Rhea" id="RHEA:10912"/>
        <dbReference type="ChEBI" id="CHEBI:15378"/>
        <dbReference type="ChEBI" id="CHEBI:15980"/>
        <dbReference type="ChEBI" id="CHEBI:29032"/>
        <dbReference type="ChEBI" id="CHEBI:30616"/>
        <dbReference type="ChEBI" id="CHEBI:33019"/>
        <dbReference type="ChEBI" id="CHEBI:57966"/>
        <dbReference type="ChEBI" id="CHEBI:456215"/>
        <dbReference type="EC" id="6.3.2.1"/>
    </reaction>
</comment>
<comment type="pathway">
    <text evidence="1">Cofactor biosynthesis; (R)-pantothenate biosynthesis; (R)-pantothenate from (R)-pantoate and beta-alanine: step 1/1.</text>
</comment>
<comment type="subunit">
    <text evidence="1">Homodimer.</text>
</comment>
<comment type="subcellular location">
    <subcellularLocation>
        <location evidence="1">Cytoplasm</location>
    </subcellularLocation>
</comment>
<comment type="miscellaneous">
    <text evidence="1">The reaction proceeds by a bi uni uni bi ping pong mechanism.</text>
</comment>
<comment type="similarity">
    <text evidence="1">Belongs to the pantothenate synthetase family.</text>
</comment>
<organism>
    <name type="scientific">Mycolicibacterium paratuberculosis (strain ATCC BAA-968 / K-10)</name>
    <name type="common">Mycobacterium paratuberculosis</name>
    <dbReference type="NCBI Taxonomy" id="262316"/>
    <lineage>
        <taxon>Bacteria</taxon>
        <taxon>Bacillati</taxon>
        <taxon>Actinomycetota</taxon>
        <taxon>Actinomycetes</taxon>
        <taxon>Mycobacteriales</taxon>
        <taxon>Mycobacteriaceae</taxon>
        <taxon>Mycobacterium</taxon>
        <taxon>Mycobacterium avium complex (MAC)</taxon>
    </lineage>
</organism>
<dbReference type="EC" id="6.3.2.1" evidence="1"/>
<dbReference type="EMBL" id="AE016958">
    <property type="protein sequence ID" value="AAS02773.1"/>
    <property type="molecule type" value="Genomic_DNA"/>
</dbReference>
<dbReference type="RefSeq" id="WP_003875612.1">
    <property type="nucleotide sequence ID" value="NZ_CP106873.1"/>
</dbReference>
<dbReference type="SMR" id="Q743Y5"/>
<dbReference type="STRING" id="262316.MAP_0456"/>
<dbReference type="GeneID" id="75268403"/>
<dbReference type="KEGG" id="mpa:MAP_0456"/>
<dbReference type="eggNOG" id="COG0414">
    <property type="taxonomic scope" value="Bacteria"/>
</dbReference>
<dbReference type="HOGENOM" id="CLU_047148_0_1_11"/>
<dbReference type="UniPathway" id="UPA00028">
    <property type="reaction ID" value="UER00005"/>
</dbReference>
<dbReference type="Proteomes" id="UP000000580">
    <property type="component" value="Chromosome"/>
</dbReference>
<dbReference type="GO" id="GO:0005829">
    <property type="term" value="C:cytosol"/>
    <property type="evidence" value="ECO:0007669"/>
    <property type="project" value="TreeGrafter"/>
</dbReference>
<dbReference type="GO" id="GO:0005524">
    <property type="term" value="F:ATP binding"/>
    <property type="evidence" value="ECO:0007669"/>
    <property type="project" value="UniProtKB-KW"/>
</dbReference>
<dbReference type="GO" id="GO:0004592">
    <property type="term" value="F:pantoate-beta-alanine ligase activity"/>
    <property type="evidence" value="ECO:0007669"/>
    <property type="project" value="UniProtKB-UniRule"/>
</dbReference>
<dbReference type="GO" id="GO:0015940">
    <property type="term" value="P:pantothenate biosynthetic process"/>
    <property type="evidence" value="ECO:0007669"/>
    <property type="project" value="UniProtKB-UniRule"/>
</dbReference>
<dbReference type="CDD" id="cd00560">
    <property type="entry name" value="PanC"/>
    <property type="match status" value="1"/>
</dbReference>
<dbReference type="FunFam" id="3.40.50.620:FF:000114">
    <property type="entry name" value="Pantothenate synthetase"/>
    <property type="match status" value="1"/>
</dbReference>
<dbReference type="Gene3D" id="3.40.50.620">
    <property type="entry name" value="HUPs"/>
    <property type="match status" value="1"/>
</dbReference>
<dbReference type="Gene3D" id="3.30.1300.10">
    <property type="entry name" value="Pantoate-beta-alanine ligase, C-terminal domain"/>
    <property type="match status" value="1"/>
</dbReference>
<dbReference type="HAMAP" id="MF_00158">
    <property type="entry name" value="PanC"/>
    <property type="match status" value="1"/>
</dbReference>
<dbReference type="InterPro" id="IPR003721">
    <property type="entry name" value="Pantoate_ligase"/>
</dbReference>
<dbReference type="InterPro" id="IPR042176">
    <property type="entry name" value="Pantoate_ligase_C"/>
</dbReference>
<dbReference type="InterPro" id="IPR014729">
    <property type="entry name" value="Rossmann-like_a/b/a_fold"/>
</dbReference>
<dbReference type="NCBIfam" id="TIGR00018">
    <property type="entry name" value="panC"/>
    <property type="match status" value="1"/>
</dbReference>
<dbReference type="PANTHER" id="PTHR21299">
    <property type="entry name" value="CYTIDYLATE KINASE/PANTOATE-BETA-ALANINE LIGASE"/>
    <property type="match status" value="1"/>
</dbReference>
<dbReference type="PANTHER" id="PTHR21299:SF1">
    <property type="entry name" value="PANTOATE--BETA-ALANINE LIGASE"/>
    <property type="match status" value="1"/>
</dbReference>
<dbReference type="Pfam" id="PF02569">
    <property type="entry name" value="Pantoate_ligase"/>
    <property type="match status" value="1"/>
</dbReference>
<dbReference type="SUPFAM" id="SSF52374">
    <property type="entry name" value="Nucleotidylyl transferase"/>
    <property type="match status" value="1"/>
</dbReference>